<organism>
    <name type="scientific">Mus musculus</name>
    <name type="common">Mouse</name>
    <dbReference type="NCBI Taxonomy" id="10090"/>
    <lineage>
        <taxon>Eukaryota</taxon>
        <taxon>Metazoa</taxon>
        <taxon>Chordata</taxon>
        <taxon>Craniata</taxon>
        <taxon>Vertebrata</taxon>
        <taxon>Euteleostomi</taxon>
        <taxon>Mammalia</taxon>
        <taxon>Eutheria</taxon>
        <taxon>Euarchontoglires</taxon>
        <taxon>Glires</taxon>
        <taxon>Rodentia</taxon>
        <taxon>Myomorpha</taxon>
        <taxon>Muroidea</taxon>
        <taxon>Muridae</taxon>
        <taxon>Murinae</taxon>
        <taxon>Mus</taxon>
        <taxon>Mus</taxon>
    </lineage>
</organism>
<feature type="chain" id="PRO_0000047497" description="Zinc finger protein 271">
    <location>
        <begin position="1"/>
        <end position="580"/>
    </location>
</feature>
<feature type="zinc finger region" description="C2H2-type 1" evidence="1">
    <location>
        <begin position="78"/>
        <end position="100"/>
    </location>
</feature>
<feature type="zinc finger region" description="C2H2-type 2" evidence="1">
    <location>
        <begin position="104"/>
        <end position="126"/>
    </location>
</feature>
<feature type="zinc finger region" description="C2H2-type 3" evidence="1">
    <location>
        <begin position="132"/>
        <end position="154"/>
    </location>
</feature>
<feature type="zinc finger region" description="C2H2-type 4" evidence="1">
    <location>
        <begin position="160"/>
        <end position="182"/>
    </location>
</feature>
<feature type="zinc finger region" description="C2H2-type 5" evidence="1">
    <location>
        <begin position="188"/>
        <end position="210"/>
    </location>
</feature>
<feature type="zinc finger region" description="C2H2-type 6" evidence="1">
    <location>
        <begin position="216"/>
        <end position="238"/>
    </location>
</feature>
<feature type="zinc finger region" description="C2H2-type 7" evidence="1">
    <location>
        <begin position="244"/>
        <end position="266"/>
    </location>
</feature>
<feature type="zinc finger region" description="C2H2-type 8" evidence="1">
    <location>
        <begin position="272"/>
        <end position="294"/>
    </location>
</feature>
<feature type="zinc finger region" description="C2H2-type 9" evidence="1">
    <location>
        <begin position="300"/>
        <end position="322"/>
    </location>
</feature>
<feature type="zinc finger region" description="C2H2-type 10" evidence="1">
    <location>
        <begin position="328"/>
        <end position="350"/>
    </location>
</feature>
<feature type="zinc finger region" description="C2H2-type 11" evidence="1">
    <location>
        <begin position="356"/>
        <end position="378"/>
    </location>
</feature>
<feature type="zinc finger region" description="C2H2-type 12" evidence="1">
    <location>
        <begin position="384"/>
        <end position="406"/>
    </location>
</feature>
<feature type="zinc finger region" description="C2H2-type 13" evidence="1">
    <location>
        <begin position="412"/>
        <end position="434"/>
    </location>
</feature>
<feature type="zinc finger region" description="C2H2-type 14" evidence="1">
    <location>
        <begin position="440"/>
        <end position="462"/>
    </location>
</feature>
<feature type="zinc finger region" description="C2H2-type 15" evidence="1">
    <location>
        <begin position="468"/>
        <end position="490"/>
    </location>
</feature>
<feature type="zinc finger region" description="C2H2-type 16" evidence="1">
    <location>
        <begin position="496"/>
        <end position="518"/>
    </location>
</feature>
<feature type="zinc finger region" description="C2H2-type 17" evidence="1">
    <location>
        <begin position="524"/>
        <end position="545"/>
    </location>
</feature>
<feature type="zinc finger region" description="C2H2-type 18" evidence="1">
    <location>
        <begin position="551"/>
        <end position="573"/>
    </location>
</feature>
<feature type="sequence conflict" description="In Ref. 2; AAA40583." evidence="3" ref="2">
    <original>D</original>
    <variation>H</variation>
    <location>
        <position position="370"/>
    </location>
</feature>
<accession>P15620</accession>
<comment type="function">
    <text>May act to control gene activity during the pachytene stage of meiotic prophase. May function as a transcription activator.</text>
</comment>
<comment type="subcellular location">
    <subcellularLocation>
        <location>Nucleus</location>
    </subcellularLocation>
</comment>
<comment type="tissue specificity">
    <text evidence="2">Selectively expressed in adult testis.</text>
</comment>
<comment type="similarity">
    <text evidence="3">Belongs to the krueppel C2H2-type zinc-finger protein family.</text>
</comment>
<evidence type="ECO:0000255" key="1">
    <source>
        <dbReference type="PROSITE-ProRule" id="PRU00042"/>
    </source>
</evidence>
<evidence type="ECO:0000269" key="2">
    <source>
    </source>
</evidence>
<evidence type="ECO:0000305" key="3"/>
<name>ZN271_MOUSE</name>
<protein>
    <recommendedName>
        <fullName>Zinc finger protein 271</fullName>
    </recommendedName>
    <alternativeName>
        <fullName>Zinc finger protein 35</fullName>
        <shortName>Zfp-35</shortName>
    </alternativeName>
</protein>
<sequence>MEIQFSYESQDHHFLSDGETKIKIGEPATEEEMTGKIGTVTEESGSLEEDVPHDSRGKEFREFGEELNDQMLFRRRQYNCDECDQSFAWSTGLIRHQRTHWKPYECEECGKAFRMSSALVLHQRIHTGEKPYPCSWCIKSFSRSSDLIKHQRVHTGEKPYKCDECGKAFSQSSDLMIHQRIHTGEKPYQCSHCSKSFSQHSGMVKHLRIHTGEKPYMCNHCYKHFSQSSDLIKHQRIHTGEKPYKCDVCGKAFSQSSDRILHQRIHTGEKPYPCAQCNKSFSQNSDLIKHRRIHTGEKPYKCSECGKAFNQSSVLILHQRIHTGEKPYPCNQCTKSFSRLSDLINHQRIHTGEKPYPCSQCSKMFSRRSDLVKHYRIHTGEKPYECDKCGKTFSQSSNLILHQRIHTGEKPYPCNSCSKSFSRGSDLIKHQRVHTGEKPYTCNLCSKSFSQSSDLTKHQRVHSGEKPYHCSSCNKAFRQSSDLILHHRVHTGERPYACTQCPRSFSQKSDLIKHQRIHTGEKPYKCMCGKAFSQCSAFTLHQRIHTGEKPYPCAQCGKSFSQRSDLVNHQRVHADQKLQM</sequence>
<reference key="1">
    <citation type="journal article" date="1990" name="EMBO J.">
        <title>A mouse zinc finger gene which is transiently expressed during spermatogenesis.</title>
        <authorList>
            <person name="Cunliffe V.T."/>
            <person name="Koopman P."/>
            <person name="McLaren A."/>
            <person name="Trowsdale J."/>
        </authorList>
    </citation>
    <scope>NUCLEOTIDE SEQUENCE [MRNA]</scope>
    <scope>TISSUE SPECIFICITY</scope>
    <source>
        <strain>MF1</strain>
        <tissue>Testis</tissue>
    </source>
</reference>
<reference key="2">
    <citation type="journal article" date="1990" name="Genomics">
        <title>Genomic analysis of a mouse zinc finger gene, Zfp-35, that is up-regulated during spermatogenesis.</title>
        <authorList>
            <person name="Cunliffe V."/>
            <person name="Williams S."/>
            <person name="Trowsdale J."/>
        </authorList>
    </citation>
    <scope>NUCLEOTIDE SEQUENCE [GENOMIC DNA]</scope>
</reference>
<keyword id="KW-0010">Activator</keyword>
<keyword id="KW-0217">Developmental protein</keyword>
<keyword id="KW-0221">Differentiation</keyword>
<keyword id="KW-0238">DNA-binding</keyword>
<keyword id="KW-0479">Metal-binding</keyword>
<keyword id="KW-0539">Nucleus</keyword>
<keyword id="KW-1185">Reference proteome</keyword>
<keyword id="KW-0677">Repeat</keyword>
<keyword id="KW-0744">Spermatogenesis</keyword>
<keyword id="KW-0804">Transcription</keyword>
<keyword id="KW-0805">Transcription regulation</keyword>
<keyword id="KW-0862">Zinc</keyword>
<keyword id="KW-0863">Zinc-finger</keyword>
<proteinExistence type="evidence at transcript level"/>
<dbReference type="EMBL" id="X17617">
    <property type="protein sequence ID" value="CAA35618.1"/>
    <property type="molecule type" value="mRNA"/>
</dbReference>
<dbReference type="EMBL" id="M36146">
    <property type="protein sequence ID" value="AAA40583.1"/>
    <property type="molecule type" value="Genomic_DNA"/>
</dbReference>
<dbReference type="EMBL" id="M36145">
    <property type="protein sequence ID" value="AAA40583.1"/>
    <property type="status" value="JOINED"/>
    <property type="molecule type" value="Genomic_DNA"/>
</dbReference>
<dbReference type="CCDS" id="CCDS29097.1"/>
<dbReference type="PIR" id="A37107">
    <property type="entry name" value="A37107"/>
</dbReference>
<dbReference type="RefSeq" id="NP_035885.2">
    <property type="nucleotide sequence ID" value="NM_011755.2"/>
</dbReference>
<dbReference type="SMR" id="P15620"/>
<dbReference type="BioGRID" id="204657">
    <property type="interactions" value="1"/>
</dbReference>
<dbReference type="FunCoup" id="P15620">
    <property type="interactions" value="2"/>
</dbReference>
<dbReference type="STRING" id="10090.ENSMUSP00000074475"/>
<dbReference type="iPTMnet" id="P15620"/>
<dbReference type="PhosphoSitePlus" id="P15620"/>
<dbReference type="PaxDb" id="10090-ENSMUSP00000074475"/>
<dbReference type="ProteomicsDB" id="275279"/>
<dbReference type="DNASU" id="22694"/>
<dbReference type="Ensembl" id="ENSMUST00000074941.8">
    <property type="protein sequence ID" value="ENSMUSP00000074475.8"/>
    <property type="gene ID" value="ENSMUSG00000063281.10"/>
</dbReference>
<dbReference type="GeneID" id="22694"/>
<dbReference type="KEGG" id="mmu:22694"/>
<dbReference type="UCSC" id="uc008egk.1">
    <property type="organism name" value="mouse"/>
</dbReference>
<dbReference type="AGR" id="MGI:99179"/>
<dbReference type="CTD" id="22694"/>
<dbReference type="MGI" id="MGI:99179">
    <property type="gene designation" value="Zfp35"/>
</dbReference>
<dbReference type="VEuPathDB" id="HostDB:ENSMUSG00000063281"/>
<dbReference type="eggNOG" id="KOG1721">
    <property type="taxonomic scope" value="Eukaryota"/>
</dbReference>
<dbReference type="GeneTree" id="ENSGT00940000162441"/>
<dbReference type="HOGENOM" id="CLU_002678_44_5_1"/>
<dbReference type="InParanoid" id="P15620"/>
<dbReference type="OMA" id="YGQSFVW"/>
<dbReference type="OrthoDB" id="1095242at2759"/>
<dbReference type="PhylomeDB" id="P15620"/>
<dbReference type="TreeFam" id="TF341817"/>
<dbReference type="Reactome" id="R-MMU-212436">
    <property type="pathway name" value="Generic Transcription Pathway"/>
</dbReference>
<dbReference type="BioGRID-ORCS" id="22694">
    <property type="hits" value="3 hits in 77 CRISPR screens"/>
</dbReference>
<dbReference type="ChiTaRS" id="Zfp35">
    <property type="organism name" value="mouse"/>
</dbReference>
<dbReference type="PRO" id="PR:P15620"/>
<dbReference type="Proteomes" id="UP000000589">
    <property type="component" value="Chromosome 18"/>
</dbReference>
<dbReference type="RNAct" id="P15620">
    <property type="molecule type" value="protein"/>
</dbReference>
<dbReference type="Bgee" id="ENSMUSG00000063281">
    <property type="expression patterns" value="Expressed in floor plate of midbrain and 249 other cell types or tissues"/>
</dbReference>
<dbReference type="ExpressionAtlas" id="P15620">
    <property type="expression patterns" value="baseline and differential"/>
</dbReference>
<dbReference type="GO" id="GO:0005634">
    <property type="term" value="C:nucleus"/>
    <property type="evidence" value="ECO:0007669"/>
    <property type="project" value="UniProtKB-SubCell"/>
</dbReference>
<dbReference type="GO" id="GO:0003677">
    <property type="term" value="F:DNA binding"/>
    <property type="evidence" value="ECO:0007669"/>
    <property type="project" value="UniProtKB-KW"/>
</dbReference>
<dbReference type="GO" id="GO:0008270">
    <property type="term" value="F:zinc ion binding"/>
    <property type="evidence" value="ECO:0007669"/>
    <property type="project" value="UniProtKB-KW"/>
</dbReference>
<dbReference type="GO" id="GO:0030154">
    <property type="term" value="P:cell differentiation"/>
    <property type="evidence" value="ECO:0007669"/>
    <property type="project" value="UniProtKB-KW"/>
</dbReference>
<dbReference type="GO" id="GO:0002437">
    <property type="term" value="P:inflammatory response to antigenic stimulus"/>
    <property type="evidence" value="ECO:0000315"/>
    <property type="project" value="MGI"/>
</dbReference>
<dbReference type="GO" id="GO:0045629">
    <property type="term" value="P:negative regulation of T-helper 2 cell differentiation"/>
    <property type="evidence" value="ECO:0000315"/>
    <property type="project" value="MGI"/>
</dbReference>
<dbReference type="GO" id="GO:0002829">
    <property type="term" value="P:negative regulation of type 2 immune response"/>
    <property type="evidence" value="ECO:0000315"/>
    <property type="project" value="MGI"/>
</dbReference>
<dbReference type="GO" id="GO:0007283">
    <property type="term" value="P:spermatogenesis"/>
    <property type="evidence" value="ECO:0007669"/>
    <property type="project" value="UniProtKB-KW"/>
</dbReference>
<dbReference type="FunFam" id="3.30.160.60:FF:003583">
    <property type="match status" value="1"/>
</dbReference>
<dbReference type="FunFam" id="3.30.160.60:FF:000512">
    <property type="entry name" value="zinc finger protein 197 isoform X1"/>
    <property type="match status" value="1"/>
</dbReference>
<dbReference type="FunFam" id="3.30.160.60:FF:001534">
    <property type="entry name" value="zinc finger protein 227 isoform X1"/>
    <property type="match status" value="2"/>
</dbReference>
<dbReference type="FunFam" id="3.30.160.60:FF:000622">
    <property type="entry name" value="zinc finger protein 26 isoform X3"/>
    <property type="match status" value="1"/>
</dbReference>
<dbReference type="FunFam" id="3.30.160.60:FF:002259">
    <property type="entry name" value="zinc finger protein 271"/>
    <property type="match status" value="1"/>
</dbReference>
<dbReference type="FunFam" id="3.30.160.60:FF:002343">
    <property type="entry name" value="Zinc finger protein 33A"/>
    <property type="match status" value="4"/>
</dbReference>
<dbReference type="FunFam" id="3.30.160.60:FF:001498">
    <property type="entry name" value="Zinc finger protein 404"/>
    <property type="match status" value="1"/>
</dbReference>
<dbReference type="FunFam" id="3.30.160.60:FF:000663">
    <property type="entry name" value="Zinc finger protein 45"/>
    <property type="match status" value="2"/>
</dbReference>
<dbReference type="FunFam" id="3.30.160.60:FF:000431">
    <property type="entry name" value="zinc finger protein 629 isoform X2"/>
    <property type="match status" value="2"/>
</dbReference>
<dbReference type="FunFam" id="3.30.160.60:FF:000912">
    <property type="entry name" value="Zinc finger protein 660"/>
    <property type="match status" value="3"/>
</dbReference>
<dbReference type="Gene3D" id="3.30.160.60">
    <property type="entry name" value="Classic Zinc Finger"/>
    <property type="match status" value="18"/>
</dbReference>
<dbReference type="InterPro" id="IPR050636">
    <property type="entry name" value="C2H2-ZF_domain-containing"/>
</dbReference>
<dbReference type="InterPro" id="IPR036236">
    <property type="entry name" value="Znf_C2H2_sf"/>
</dbReference>
<dbReference type="InterPro" id="IPR013087">
    <property type="entry name" value="Znf_C2H2_type"/>
</dbReference>
<dbReference type="PANTHER" id="PTHR47772:SF15">
    <property type="entry name" value="REDUCED EXPRESSION 2-RELATED"/>
    <property type="match status" value="1"/>
</dbReference>
<dbReference type="PANTHER" id="PTHR47772">
    <property type="entry name" value="ZINC FINGER PROTEIN 200"/>
    <property type="match status" value="1"/>
</dbReference>
<dbReference type="Pfam" id="PF00096">
    <property type="entry name" value="zf-C2H2"/>
    <property type="match status" value="17"/>
</dbReference>
<dbReference type="SMART" id="SM00355">
    <property type="entry name" value="ZnF_C2H2"/>
    <property type="match status" value="18"/>
</dbReference>
<dbReference type="SUPFAM" id="SSF57667">
    <property type="entry name" value="beta-beta-alpha zinc fingers"/>
    <property type="match status" value="11"/>
</dbReference>
<dbReference type="PROSITE" id="PS00028">
    <property type="entry name" value="ZINC_FINGER_C2H2_1"/>
    <property type="match status" value="17"/>
</dbReference>
<dbReference type="PROSITE" id="PS50157">
    <property type="entry name" value="ZINC_FINGER_C2H2_2"/>
    <property type="match status" value="18"/>
</dbReference>
<gene>
    <name type="primary">Znf271</name>
    <name type="synonym">Zfp-35</name>
    <name type="synonym">Zfp35</name>
</gene>